<gene>
    <name evidence="1" type="primary">thrS</name>
    <name type="ordered locus">Tbd_1007</name>
</gene>
<name>SYT_THIDA</name>
<proteinExistence type="inferred from homology"/>
<dbReference type="EC" id="6.1.1.3" evidence="1"/>
<dbReference type="EMBL" id="CP000116">
    <property type="protein sequence ID" value="AAZ96960.1"/>
    <property type="molecule type" value="Genomic_DNA"/>
</dbReference>
<dbReference type="RefSeq" id="WP_011311519.1">
    <property type="nucleotide sequence ID" value="NC_007404.1"/>
</dbReference>
<dbReference type="SMR" id="Q3SK34"/>
<dbReference type="STRING" id="292415.Tbd_1007"/>
<dbReference type="KEGG" id="tbd:Tbd_1007"/>
<dbReference type="eggNOG" id="COG0441">
    <property type="taxonomic scope" value="Bacteria"/>
</dbReference>
<dbReference type="HOGENOM" id="CLU_008554_0_1_4"/>
<dbReference type="OrthoDB" id="9802304at2"/>
<dbReference type="Proteomes" id="UP000008291">
    <property type="component" value="Chromosome"/>
</dbReference>
<dbReference type="GO" id="GO:0005829">
    <property type="term" value="C:cytosol"/>
    <property type="evidence" value="ECO:0007669"/>
    <property type="project" value="TreeGrafter"/>
</dbReference>
<dbReference type="GO" id="GO:0005524">
    <property type="term" value="F:ATP binding"/>
    <property type="evidence" value="ECO:0007669"/>
    <property type="project" value="UniProtKB-UniRule"/>
</dbReference>
<dbReference type="GO" id="GO:0046872">
    <property type="term" value="F:metal ion binding"/>
    <property type="evidence" value="ECO:0007669"/>
    <property type="project" value="UniProtKB-KW"/>
</dbReference>
<dbReference type="GO" id="GO:0004829">
    <property type="term" value="F:threonine-tRNA ligase activity"/>
    <property type="evidence" value="ECO:0007669"/>
    <property type="project" value="UniProtKB-UniRule"/>
</dbReference>
<dbReference type="GO" id="GO:0000049">
    <property type="term" value="F:tRNA binding"/>
    <property type="evidence" value="ECO:0007669"/>
    <property type="project" value="UniProtKB-KW"/>
</dbReference>
<dbReference type="GO" id="GO:0006435">
    <property type="term" value="P:threonyl-tRNA aminoacylation"/>
    <property type="evidence" value="ECO:0007669"/>
    <property type="project" value="UniProtKB-UniRule"/>
</dbReference>
<dbReference type="CDD" id="cd01667">
    <property type="entry name" value="TGS_ThrRS"/>
    <property type="match status" value="1"/>
</dbReference>
<dbReference type="CDD" id="cd00860">
    <property type="entry name" value="ThrRS_anticodon"/>
    <property type="match status" value="1"/>
</dbReference>
<dbReference type="CDD" id="cd00771">
    <property type="entry name" value="ThrRS_core"/>
    <property type="match status" value="1"/>
</dbReference>
<dbReference type="FunFam" id="3.10.20.30:FF:000005">
    <property type="entry name" value="Threonine--tRNA ligase"/>
    <property type="match status" value="1"/>
</dbReference>
<dbReference type="FunFam" id="3.30.54.20:FF:000002">
    <property type="entry name" value="Threonine--tRNA ligase"/>
    <property type="match status" value="1"/>
</dbReference>
<dbReference type="FunFam" id="3.30.930.10:FF:000002">
    <property type="entry name" value="Threonine--tRNA ligase"/>
    <property type="match status" value="1"/>
</dbReference>
<dbReference type="FunFam" id="3.40.50.800:FF:000001">
    <property type="entry name" value="Threonine--tRNA ligase"/>
    <property type="match status" value="1"/>
</dbReference>
<dbReference type="FunFam" id="3.30.980.10:FF:000005">
    <property type="entry name" value="Threonyl-tRNA synthetase, mitochondrial"/>
    <property type="match status" value="1"/>
</dbReference>
<dbReference type="Gene3D" id="3.10.20.30">
    <property type="match status" value="1"/>
</dbReference>
<dbReference type="Gene3D" id="3.30.54.20">
    <property type="match status" value="1"/>
</dbReference>
<dbReference type="Gene3D" id="3.40.50.800">
    <property type="entry name" value="Anticodon-binding domain"/>
    <property type="match status" value="1"/>
</dbReference>
<dbReference type="Gene3D" id="3.30.930.10">
    <property type="entry name" value="Bira Bifunctional Protein, Domain 2"/>
    <property type="match status" value="1"/>
</dbReference>
<dbReference type="Gene3D" id="3.30.980.10">
    <property type="entry name" value="Threonyl-trna Synthetase, Chain A, domain 2"/>
    <property type="match status" value="1"/>
</dbReference>
<dbReference type="HAMAP" id="MF_00184">
    <property type="entry name" value="Thr_tRNA_synth"/>
    <property type="match status" value="1"/>
</dbReference>
<dbReference type="InterPro" id="IPR002314">
    <property type="entry name" value="aa-tRNA-synt_IIb"/>
</dbReference>
<dbReference type="InterPro" id="IPR006195">
    <property type="entry name" value="aa-tRNA-synth_II"/>
</dbReference>
<dbReference type="InterPro" id="IPR045864">
    <property type="entry name" value="aa-tRNA-synth_II/BPL/LPL"/>
</dbReference>
<dbReference type="InterPro" id="IPR004154">
    <property type="entry name" value="Anticodon-bd"/>
</dbReference>
<dbReference type="InterPro" id="IPR036621">
    <property type="entry name" value="Anticodon-bd_dom_sf"/>
</dbReference>
<dbReference type="InterPro" id="IPR012675">
    <property type="entry name" value="Beta-grasp_dom_sf"/>
</dbReference>
<dbReference type="InterPro" id="IPR004095">
    <property type="entry name" value="TGS"/>
</dbReference>
<dbReference type="InterPro" id="IPR012676">
    <property type="entry name" value="TGS-like"/>
</dbReference>
<dbReference type="InterPro" id="IPR002320">
    <property type="entry name" value="Thr-tRNA-ligase_IIa"/>
</dbReference>
<dbReference type="InterPro" id="IPR018163">
    <property type="entry name" value="Thr/Ala-tRNA-synth_IIc_edit"/>
</dbReference>
<dbReference type="InterPro" id="IPR047246">
    <property type="entry name" value="ThrRS_anticodon"/>
</dbReference>
<dbReference type="InterPro" id="IPR033728">
    <property type="entry name" value="ThrRS_core"/>
</dbReference>
<dbReference type="InterPro" id="IPR012947">
    <property type="entry name" value="tRNA_SAD"/>
</dbReference>
<dbReference type="NCBIfam" id="TIGR00418">
    <property type="entry name" value="thrS"/>
    <property type="match status" value="1"/>
</dbReference>
<dbReference type="PANTHER" id="PTHR11451:SF44">
    <property type="entry name" value="THREONINE--TRNA LIGASE, CHLOROPLASTIC_MITOCHONDRIAL 2"/>
    <property type="match status" value="1"/>
</dbReference>
<dbReference type="PANTHER" id="PTHR11451">
    <property type="entry name" value="THREONINE-TRNA LIGASE"/>
    <property type="match status" value="1"/>
</dbReference>
<dbReference type="Pfam" id="PF03129">
    <property type="entry name" value="HGTP_anticodon"/>
    <property type="match status" value="1"/>
</dbReference>
<dbReference type="Pfam" id="PF02824">
    <property type="entry name" value="TGS"/>
    <property type="match status" value="1"/>
</dbReference>
<dbReference type="Pfam" id="PF00587">
    <property type="entry name" value="tRNA-synt_2b"/>
    <property type="match status" value="1"/>
</dbReference>
<dbReference type="Pfam" id="PF07973">
    <property type="entry name" value="tRNA_SAD"/>
    <property type="match status" value="1"/>
</dbReference>
<dbReference type="PRINTS" id="PR01047">
    <property type="entry name" value="TRNASYNTHTHR"/>
</dbReference>
<dbReference type="SMART" id="SM00863">
    <property type="entry name" value="tRNA_SAD"/>
    <property type="match status" value="1"/>
</dbReference>
<dbReference type="SUPFAM" id="SSF52954">
    <property type="entry name" value="Class II aaRS ABD-related"/>
    <property type="match status" value="1"/>
</dbReference>
<dbReference type="SUPFAM" id="SSF55681">
    <property type="entry name" value="Class II aaRS and biotin synthetases"/>
    <property type="match status" value="1"/>
</dbReference>
<dbReference type="SUPFAM" id="SSF81271">
    <property type="entry name" value="TGS-like"/>
    <property type="match status" value="1"/>
</dbReference>
<dbReference type="SUPFAM" id="SSF55186">
    <property type="entry name" value="ThrRS/AlaRS common domain"/>
    <property type="match status" value="1"/>
</dbReference>
<dbReference type="PROSITE" id="PS50862">
    <property type="entry name" value="AA_TRNA_LIGASE_II"/>
    <property type="match status" value="1"/>
</dbReference>
<dbReference type="PROSITE" id="PS51880">
    <property type="entry name" value="TGS"/>
    <property type="match status" value="1"/>
</dbReference>
<reference key="1">
    <citation type="journal article" date="2006" name="J. Bacteriol.">
        <title>The genome sequence of the obligately chemolithoautotrophic, facultatively anaerobic bacterium Thiobacillus denitrificans.</title>
        <authorList>
            <person name="Beller H.R."/>
            <person name="Chain P.S."/>
            <person name="Letain T.E."/>
            <person name="Chakicherla A."/>
            <person name="Larimer F.W."/>
            <person name="Richardson P.M."/>
            <person name="Coleman M.A."/>
            <person name="Wood A.P."/>
            <person name="Kelly D.P."/>
        </authorList>
    </citation>
    <scope>NUCLEOTIDE SEQUENCE [LARGE SCALE GENOMIC DNA]</scope>
    <source>
        <strain>ATCC 25259 / T1</strain>
    </source>
</reference>
<sequence>MVTVTLPDGSVRPFEGPVTVAEVASSIGAGLAKAALAGKVDGKLVDTSYVIDADAQLAIVTAKDAEALDLIRHDAAHVMAQAVQELYPGTQVTIGPAIEDGFYYDFAREQPFTPEDLEKIEKRMDEIVKRDLPIRREVWSRDEAMKVFGDLGETYKVQIIDEVIPKGEELSIYRQGEWFDVCRGPHLPSTGKLPRAFKLMKLAGAYWRGDSKNAMLQRIYGTAWAKKEDLEAYLHRLEEAEKRDHRRLAKQLDLLHMQDEAPGMVFWHPKGWIVWQQIEQYMREKFVEYGYQEVRTPAVMDRSMWEKSGHWENYRDNMFTTASENRDYAVKPMNCPGHVQIFNSGLHSYRDLPLRLAEFGSCHRNEPSGALHGIMRVRGFTQDDAHIFCMEEQVEQEVADFIVMLQKVYADFGFNDVLVKLSTRPDKRVGSDESWDKAESALAAALEKNGLSFDLQPGEGAFYGPKIEFTLKDTLGRLWQCGTIQLDFNLPVRLGAEFVAEDNTRKIPVMLHRAILGSMERFIGILIEHHAGNFPLWLAPVQVMVMNISERQAAYAEAVAEALRRAGIRAALDLSNNKINYKIREHSLQKLPYQLVVGDKEMEARVVAVRARGNQDMGQLGLDDLIARLRAEVLARQ</sequence>
<feature type="chain" id="PRO_1000020547" description="Threonine--tRNA ligase">
    <location>
        <begin position="1"/>
        <end position="637"/>
    </location>
</feature>
<feature type="domain" description="TGS" evidence="2">
    <location>
        <begin position="1"/>
        <end position="61"/>
    </location>
</feature>
<feature type="region of interest" description="Catalytic" evidence="1">
    <location>
        <begin position="244"/>
        <end position="535"/>
    </location>
</feature>
<feature type="binding site" evidence="1">
    <location>
        <position position="335"/>
    </location>
    <ligand>
        <name>Zn(2+)</name>
        <dbReference type="ChEBI" id="CHEBI:29105"/>
    </ligand>
</feature>
<feature type="binding site" evidence="1">
    <location>
        <position position="386"/>
    </location>
    <ligand>
        <name>Zn(2+)</name>
        <dbReference type="ChEBI" id="CHEBI:29105"/>
    </ligand>
</feature>
<feature type="binding site" evidence="1">
    <location>
        <position position="512"/>
    </location>
    <ligand>
        <name>Zn(2+)</name>
        <dbReference type="ChEBI" id="CHEBI:29105"/>
    </ligand>
</feature>
<protein>
    <recommendedName>
        <fullName evidence="1">Threonine--tRNA ligase</fullName>
        <ecNumber evidence="1">6.1.1.3</ecNumber>
    </recommendedName>
    <alternativeName>
        <fullName evidence="1">Threonyl-tRNA synthetase</fullName>
        <shortName evidence="1">ThrRS</shortName>
    </alternativeName>
</protein>
<comment type="function">
    <text evidence="1">Catalyzes the attachment of threonine to tRNA(Thr) in a two-step reaction: L-threonine is first activated by ATP to form Thr-AMP and then transferred to the acceptor end of tRNA(Thr). Also edits incorrectly charged L-seryl-tRNA(Thr).</text>
</comment>
<comment type="catalytic activity">
    <reaction evidence="1">
        <text>tRNA(Thr) + L-threonine + ATP = L-threonyl-tRNA(Thr) + AMP + diphosphate + H(+)</text>
        <dbReference type="Rhea" id="RHEA:24624"/>
        <dbReference type="Rhea" id="RHEA-COMP:9670"/>
        <dbReference type="Rhea" id="RHEA-COMP:9704"/>
        <dbReference type="ChEBI" id="CHEBI:15378"/>
        <dbReference type="ChEBI" id="CHEBI:30616"/>
        <dbReference type="ChEBI" id="CHEBI:33019"/>
        <dbReference type="ChEBI" id="CHEBI:57926"/>
        <dbReference type="ChEBI" id="CHEBI:78442"/>
        <dbReference type="ChEBI" id="CHEBI:78534"/>
        <dbReference type="ChEBI" id="CHEBI:456215"/>
        <dbReference type="EC" id="6.1.1.3"/>
    </reaction>
</comment>
<comment type="cofactor">
    <cofactor evidence="1">
        <name>Zn(2+)</name>
        <dbReference type="ChEBI" id="CHEBI:29105"/>
    </cofactor>
    <text evidence="1">Binds 1 zinc ion per subunit.</text>
</comment>
<comment type="subunit">
    <text evidence="1">Homodimer.</text>
</comment>
<comment type="subcellular location">
    <subcellularLocation>
        <location evidence="1">Cytoplasm</location>
    </subcellularLocation>
</comment>
<comment type="similarity">
    <text evidence="1">Belongs to the class-II aminoacyl-tRNA synthetase family.</text>
</comment>
<accession>Q3SK34</accession>
<organism>
    <name type="scientific">Thiobacillus denitrificans (strain ATCC 25259 / T1)</name>
    <dbReference type="NCBI Taxonomy" id="292415"/>
    <lineage>
        <taxon>Bacteria</taxon>
        <taxon>Pseudomonadati</taxon>
        <taxon>Pseudomonadota</taxon>
        <taxon>Betaproteobacteria</taxon>
        <taxon>Nitrosomonadales</taxon>
        <taxon>Thiobacillaceae</taxon>
        <taxon>Thiobacillus</taxon>
    </lineage>
</organism>
<keyword id="KW-0030">Aminoacyl-tRNA synthetase</keyword>
<keyword id="KW-0067">ATP-binding</keyword>
<keyword id="KW-0963">Cytoplasm</keyword>
<keyword id="KW-0436">Ligase</keyword>
<keyword id="KW-0479">Metal-binding</keyword>
<keyword id="KW-0547">Nucleotide-binding</keyword>
<keyword id="KW-0648">Protein biosynthesis</keyword>
<keyword id="KW-1185">Reference proteome</keyword>
<keyword id="KW-0694">RNA-binding</keyword>
<keyword id="KW-0820">tRNA-binding</keyword>
<keyword id="KW-0862">Zinc</keyword>
<evidence type="ECO:0000255" key="1">
    <source>
        <dbReference type="HAMAP-Rule" id="MF_00184"/>
    </source>
</evidence>
<evidence type="ECO:0000255" key="2">
    <source>
        <dbReference type="PROSITE-ProRule" id="PRU01228"/>
    </source>
</evidence>